<comment type="function">
    <text evidence="1">Antitoxin component of a type II toxin-antitoxin (TA) system. Neutralizes the toxic effect of cognate zeta toxin. Part of a postsegregational killing (PSK) system involved in the killing of plasmid-free cells. Continuous synthesis of the epsilon antitoxin is required to counteract the zeta toxin (By similarity).</text>
</comment>
<comment type="subunit">
    <text evidence="1">In the presence of the zeta toxin, forms an inactive PezA(2)PezT(2) heterotetramer.</text>
</comment>
<comment type="similarity">
    <text evidence="2">Belongs to the epsilon antitoxin family.</text>
</comment>
<sequence length="90" mass="10778">MAVTYEKTFEIEIINELSESVYNRVLNYVLNHELDTKNTRLLEVNLLNQLEVAQEVDLFQQPFEELQAIHEYWRSMNQYSKQILTKEKVA</sequence>
<organism>
    <name type="scientific">Streptococcus agalactiae</name>
    <dbReference type="NCBI Taxonomy" id="1311"/>
    <lineage>
        <taxon>Bacteria</taxon>
        <taxon>Bacillati</taxon>
        <taxon>Bacillota</taxon>
        <taxon>Bacilli</taxon>
        <taxon>Lactobacillales</taxon>
        <taxon>Streptococcaceae</taxon>
        <taxon>Streptococcus</taxon>
    </lineage>
</organism>
<accession>Q936E0</accession>
<dbReference type="EMBL" id="AJ301605">
    <property type="protein sequence ID" value="CAC70736.1"/>
    <property type="molecule type" value="Genomic_DNA"/>
</dbReference>
<dbReference type="SMR" id="Q936E0"/>
<dbReference type="GO" id="GO:0015643">
    <property type="term" value="F:toxic substance binding"/>
    <property type="evidence" value="ECO:0007669"/>
    <property type="project" value="InterPro"/>
</dbReference>
<dbReference type="GO" id="GO:0031342">
    <property type="term" value="P:negative regulation of cell killing"/>
    <property type="evidence" value="ECO:0007669"/>
    <property type="project" value="InterPro"/>
</dbReference>
<dbReference type="GO" id="GO:0009636">
    <property type="term" value="P:response to toxic substance"/>
    <property type="evidence" value="ECO:0007669"/>
    <property type="project" value="InterPro"/>
</dbReference>
<dbReference type="Gene3D" id="1.10.8.130">
    <property type="match status" value="1"/>
</dbReference>
<dbReference type="InterPro" id="IPR035569">
    <property type="entry name" value="Antitoxin_epsilon/PezA_dom_sf"/>
</dbReference>
<dbReference type="InterPro" id="IPR015090">
    <property type="entry name" value="Epsilon_PezA_dom"/>
</dbReference>
<dbReference type="Pfam" id="PF08998">
    <property type="entry name" value="Epsilon_antitox"/>
    <property type="match status" value="1"/>
</dbReference>
<dbReference type="SUPFAM" id="SSF81710">
    <property type="entry name" value="Plasmid maintenance system epsilon/zeta, antidote epsilon subunit"/>
    <property type="match status" value="1"/>
</dbReference>
<keyword id="KW-0614">Plasmid</keyword>
<keyword id="KW-1277">Toxin-antitoxin system</keyword>
<geneLocation type="plasmid">
    <name>pIP501</name>
</geneLocation>
<proteinExistence type="inferred from homology"/>
<feature type="initiator methionine" description="Removed" evidence="1">
    <location>
        <position position="1"/>
    </location>
</feature>
<feature type="chain" id="PRO_0000221549" description="Antitoxin epsilon">
    <location>
        <begin position="2"/>
        <end position="90"/>
    </location>
</feature>
<name>EATX_STRAG</name>
<reference key="1">
    <citation type="submission" date="2001-08" db="EMBL/GenBank/DDBJ databases">
        <title>Lactobacillus helveticus ATCC15009 as a host for native and conjugative plasmid DNA.</title>
        <authorList>
            <person name="Thompson J.K."/>
            <person name="Collins M.A."/>
            <person name="Foley S."/>
        </authorList>
    </citation>
    <scope>NUCLEOTIDE SEQUENCE [GENOMIC DNA]</scope>
</reference>
<evidence type="ECO:0000250" key="1"/>
<evidence type="ECO:0000305" key="2"/>
<protein>
    <recommendedName>
        <fullName>Antitoxin epsilon</fullName>
    </recommendedName>
</protein>